<organism>
    <name type="scientific">Opistophthalmus carinatus</name>
    <name type="common">African yellow leg scorpion</name>
    <dbReference type="NCBI Taxonomy" id="190115"/>
    <lineage>
        <taxon>Eukaryota</taxon>
        <taxon>Metazoa</taxon>
        <taxon>Ecdysozoa</taxon>
        <taxon>Arthropoda</taxon>
        <taxon>Chelicerata</taxon>
        <taxon>Arachnida</taxon>
        <taxon>Scorpiones</taxon>
        <taxon>Iurida</taxon>
        <taxon>Scorpionoidea</taxon>
        <taxon>Scorpionidae</taxon>
        <taxon>Opistophthalminae</taxon>
        <taxon>Opistophthalmus</taxon>
    </lineage>
</organism>
<keyword id="KW-0044">Antibiotic</keyword>
<keyword id="KW-0929">Antimicrobial</keyword>
<keyword id="KW-1015">Disulfide bond</keyword>
<keyword id="KW-0295">Fungicide</keyword>
<keyword id="KW-0964">Secreted</keyword>
<keyword id="KW-0732">Signal</keyword>
<keyword id="KW-0800">Toxin</keyword>
<name>KBX31_OPICA</name>
<feature type="signal peptide" evidence="1">
    <location>
        <begin position="1"/>
        <end position="19"/>
    </location>
</feature>
<feature type="chain" id="PRO_0000274681" description="Opiscorpine-1" evidence="6">
    <location>
        <begin position="20"/>
        <end position="95"/>
    </location>
</feature>
<feature type="domain" description="BetaSPN-type CS-alpha/beta" evidence="2">
    <location>
        <begin position="55"/>
        <end position="95"/>
    </location>
</feature>
<feature type="disulfide bond" evidence="2">
    <location>
        <begin position="58"/>
        <end position="82"/>
    </location>
</feature>
<feature type="disulfide bond" evidence="2">
    <location>
        <begin position="68"/>
        <end position="87"/>
    </location>
</feature>
<feature type="disulfide bond" evidence="2">
    <location>
        <begin position="72"/>
        <end position="89"/>
    </location>
</feature>
<dbReference type="EMBL" id="AY423481">
    <property type="protein sequence ID" value="AAQ94352.1"/>
    <property type="molecule type" value="mRNA"/>
</dbReference>
<dbReference type="EMBL" id="AY423486">
    <property type="protein sequence ID" value="AAQ94357.1"/>
    <property type="molecule type" value="mRNA"/>
</dbReference>
<dbReference type="SMR" id="Q5WR03"/>
<dbReference type="GO" id="GO:0005576">
    <property type="term" value="C:extracellular region"/>
    <property type="evidence" value="ECO:0007669"/>
    <property type="project" value="UniProtKB-SubCell"/>
</dbReference>
<dbReference type="GO" id="GO:0090729">
    <property type="term" value="F:toxin activity"/>
    <property type="evidence" value="ECO:0007669"/>
    <property type="project" value="UniProtKB-KW"/>
</dbReference>
<dbReference type="GO" id="GO:0042742">
    <property type="term" value="P:defense response to bacterium"/>
    <property type="evidence" value="ECO:0007669"/>
    <property type="project" value="UniProtKB-KW"/>
</dbReference>
<dbReference type="GO" id="GO:0050832">
    <property type="term" value="P:defense response to fungus"/>
    <property type="evidence" value="ECO:0007669"/>
    <property type="project" value="UniProtKB-KW"/>
</dbReference>
<dbReference type="GO" id="GO:0031640">
    <property type="term" value="P:killing of cells of another organism"/>
    <property type="evidence" value="ECO:0007669"/>
    <property type="project" value="UniProtKB-KW"/>
</dbReference>
<dbReference type="InterPro" id="IPR029237">
    <property type="entry name" value="Long_scorpion_toxin_alpha/beta"/>
</dbReference>
<dbReference type="InterPro" id="IPR036574">
    <property type="entry name" value="Scorpion_toxin-like_sf"/>
</dbReference>
<dbReference type="Pfam" id="PF14866">
    <property type="entry name" value="Scorpion_toxin_alpha-beta"/>
    <property type="match status" value="1"/>
</dbReference>
<dbReference type="SUPFAM" id="SSF57095">
    <property type="entry name" value="Scorpion toxin-like"/>
    <property type="match status" value="1"/>
</dbReference>
<dbReference type="PROSITE" id="PS51862">
    <property type="entry name" value="BSPN_CSAB"/>
    <property type="match status" value="1"/>
</dbReference>
<reference key="1">
    <citation type="journal article" date="2004" name="Cell. Mol. Life Sci.">
        <title>The scorpine family of defensins: gene structure, alternative polyadenylation and fold recognition.</title>
        <authorList>
            <person name="Zhu S."/>
            <person name="Tytgat J."/>
        </authorList>
    </citation>
    <scope>NUCLEOTIDE SEQUENCE [MRNA]</scope>
    <scope>SYNTHESIS OF 20-54</scope>
    <scope>FUNCTION</scope>
    <source>
        <tissue>Venom gland</tissue>
    </source>
</reference>
<proteinExistence type="inferred from homology"/>
<protein>
    <recommendedName>
        <fullName evidence="4">Opiscorpine-1</fullName>
    </recommendedName>
</protein>
<comment type="function">
    <text evidence="3">The short synthetic peptide (20-54) has antimicrobial activity against the yeasts F.culmorum (IC(50)=8.8 uM) and F.oxysporum (IC(50)=10 uM), and the Gram-negative bacteria E.coli.</text>
</comment>
<comment type="subcellular location">
    <subcellularLocation>
        <location evidence="6">Secreted</location>
    </subcellularLocation>
</comment>
<comment type="tissue specificity">
    <text evidence="6">Expressed by the venom gland.</text>
</comment>
<comment type="similarity">
    <text evidence="5">Belongs to the long chain scorpion toxin family. Class 3 subfamily.</text>
</comment>
<evidence type="ECO:0000255" key="1"/>
<evidence type="ECO:0000255" key="2">
    <source>
        <dbReference type="PROSITE-ProRule" id="PRU01209"/>
    </source>
</evidence>
<evidence type="ECO:0000269" key="3">
    <source>
    </source>
</evidence>
<evidence type="ECO:0000303" key="4">
    <source>
    </source>
</evidence>
<evidence type="ECO:0000305" key="5"/>
<evidence type="ECO:0000305" key="6">
    <source>
    </source>
</evidence>
<accession>Q5WR03</accession>
<accession>Q5WQZ8</accession>
<sequence>MNNKLTALIFLGLLAIASCKWFNEKSIQNKIDEKIGKNFLGGMAKAVVHKLAKNEFMCVANVDMTKSCDTHCQKASGEKGYCHGTKCKCGVPLSY</sequence>